<keyword id="KW-0325">Glycoprotein</keyword>
<keyword id="KW-0328">Glycosyltransferase</keyword>
<keyword id="KW-0333">Golgi apparatus</keyword>
<keyword id="KW-0443">Lipid metabolism</keyword>
<keyword id="KW-0472">Membrane</keyword>
<keyword id="KW-1185">Reference proteome</keyword>
<keyword id="KW-0735">Signal-anchor</keyword>
<keyword id="KW-0808">Transferase</keyword>
<keyword id="KW-0812">Transmembrane</keyword>
<keyword id="KW-1133">Transmembrane helix</keyword>
<dbReference type="EC" id="2.4.1.69" evidence="6"/>
<dbReference type="EC" id="2.4.1.344" evidence="6"/>
<dbReference type="EMBL" id="AF064792">
    <property type="protein sequence ID" value="AAC16887.1"/>
    <property type="molecule type" value="mRNA"/>
</dbReference>
<dbReference type="EMBL" id="AF214656">
    <property type="protein sequence ID" value="AAF45146.1"/>
    <property type="molecule type" value="Genomic_DNA"/>
</dbReference>
<dbReference type="EMBL" id="AK033520">
    <property type="protein sequence ID" value="BAC28338.1"/>
    <property type="molecule type" value="mRNA"/>
</dbReference>
<dbReference type="CCDS" id="CCDS21258.1"/>
<dbReference type="RefSeq" id="NP_001258922.1">
    <property type="nucleotide sequence ID" value="NM_001271993.1"/>
</dbReference>
<dbReference type="RefSeq" id="NP_061364.2">
    <property type="nucleotide sequence ID" value="NM_018876.4"/>
</dbReference>
<dbReference type="RefSeq" id="XP_011249097.1">
    <property type="nucleotide sequence ID" value="XM_011250795.3"/>
</dbReference>
<dbReference type="FunCoup" id="Q9JL27">
    <property type="interactions" value="237"/>
</dbReference>
<dbReference type="STRING" id="10090.ENSMUSP00000063719"/>
<dbReference type="SwissLipids" id="SLP:000001426"/>
<dbReference type="CAZy" id="GT11">
    <property type="family name" value="Glycosyltransferase Family 11"/>
</dbReference>
<dbReference type="GlyCosmos" id="Q9JL27">
    <property type="glycosylation" value="4 sites, No reported glycans"/>
</dbReference>
<dbReference type="GlyGen" id="Q9JL27">
    <property type="glycosylation" value="4 sites"/>
</dbReference>
<dbReference type="PhosphoSitePlus" id="Q9JL27"/>
<dbReference type="PaxDb" id="10090-ENSMUSP00000063719"/>
<dbReference type="ProteomicsDB" id="271614"/>
<dbReference type="Antibodypedia" id="2644">
    <property type="antibodies" value="147 antibodies from 29 providers"/>
</dbReference>
<dbReference type="DNASU" id="14344"/>
<dbReference type="Ensembl" id="ENSMUST00000069800.6">
    <property type="protein sequence ID" value="ENSMUSP00000063719.5"/>
    <property type="gene ID" value="ENSMUSG00000055978.6"/>
</dbReference>
<dbReference type="GeneID" id="14344"/>
<dbReference type="KEGG" id="mmu:14344"/>
<dbReference type="UCSC" id="uc009gwn.2">
    <property type="organism name" value="mouse"/>
</dbReference>
<dbReference type="AGR" id="MGI:109374"/>
<dbReference type="CTD" id="2524"/>
<dbReference type="MGI" id="MGI:109374">
    <property type="gene designation" value="Fut2"/>
</dbReference>
<dbReference type="VEuPathDB" id="HostDB:ENSMUSG00000055978"/>
<dbReference type="eggNOG" id="ENOG502S316">
    <property type="taxonomic scope" value="Eukaryota"/>
</dbReference>
<dbReference type="GeneTree" id="ENSGT00390000001450"/>
<dbReference type="HOGENOM" id="CLU_043399_0_1_1"/>
<dbReference type="InParanoid" id="Q9JL27"/>
<dbReference type="OMA" id="KGMWTIN"/>
<dbReference type="OrthoDB" id="3226at2759"/>
<dbReference type="PhylomeDB" id="Q9JL27"/>
<dbReference type="TreeFam" id="TF315810"/>
<dbReference type="BRENDA" id="2.4.1.344">
    <property type="organism ID" value="3474"/>
</dbReference>
<dbReference type="BRENDA" id="2.4.1.69">
    <property type="organism ID" value="3474"/>
</dbReference>
<dbReference type="Reactome" id="R-MMU-9033807">
    <property type="pathway name" value="ABO blood group biosynthesis"/>
</dbReference>
<dbReference type="Reactome" id="R-MMU-9037629">
    <property type="pathway name" value="Lewis blood group biosynthesis"/>
</dbReference>
<dbReference type="Reactome" id="R-MMU-9840309">
    <property type="pathway name" value="Glycosphingolipid biosynthesis"/>
</dbReference>
<dbReference type="SABIO-RK" id="Q9JL27"/>
<dbReference type="UniPathway" id="UPA00378"/>
<dbReference type="BioGRID-ORCS" id="14344">
    <property type="hits" value="1 hit in 81 CRISPR screens"/>
</dbReference>
<dbReference type="PRO" id="PR:Q9JL27"/>
<dbReference type="Proteomes" id="UP000000589">
    <property type="component" value="Chromosome 7"/>
</dbReference>
<dbReference type="RNAct" id="Q9JL27">
    <property type="molecule type" value="protein"/>
</dbReference>
<dbReference type="Bgee" id="ENSMUSG00000055978">
    <property type="expression patterns" value="Expressed in lip and 70 other cell types or tissues"/>
</dbReference>
<dbReference type="ExpressionAtlas" id="Q9JL27">
    <property type="expression patterns" value="baseline and differential"/>
</dbReference>
<dbReference type="GO" id="GO:0005794">
    <property type="term" value="C:Golgi apparatus"/>
    <property type="evidence" value="ECO:0000266"/>
    <property type="project" value="MGI"/>
</dbReference>
<dbReference type="GO" id="GO:0032580">
    <property type="term" value="C:Golgi cisterna membrane"/>
    <property type="evidence" value="ECO:0007669"/>
    <property type="project" value="UniProtKB-SubCell"/>
</dbReference>
<dbReference type="GO" id="GO:0031127">
    <property type="term" value="F:alpha-(1,2)-fucosyltransferase activity"/>
    <property type="evidence" value="ECO:0000314"/>
    <property type="project" value="UniProtKB"/>
</dbReference>
<dbReference type="GO" id="GO:0008417">
    <property type="term" value="F:fucosyltransferase activity"/>
    <property type="evidence" value="ECO:0000314"/>
    <property type="project" value="MGI"/>
</dbReference>
<dbReference type="GO" id="GO:0008107">
    <property type="term" value="F:galactoside 2-alpha-L-fucosyltransferase activity"/>
    <property type="evidence" value="ECO:0000314"/>
    <property type="project" value="MGI"/>
</dbReference>
<dbReference type="GO" id="GO:0036065">
    <property type="term" value="P:fucosylation"/>
    <property type="evidence" value="ECO:0000314"/>
    <property type="project" value="UniProtKB"/>
</dbReference>
<dbReference type="GO" id="GO:0006664">
    <property type="term" value="P:glycolipid metabolic process"/>
    <property type="evidence" value="ECO:0000315"/>
    <property type="project" value="UniProtKB"/>
</dbReference>
<dbReference type="GO" id="GO:0009312">
    <property type="term" value="P:oligosaccharide biosynthetic process"/>
    <property type="evidence" value="ECO:0000314"/>
    <property type="project" value="MGI"/>
</dbReference>
<dbReference type="GO" id="GO:0006486">
    <property type="term" value="P:protein glycosylation"/>
    <property type="evidence" value="ECO:0000314"/>
    <property type="project" value="MGI"/>
</dbReference>
<dbReference type="GO" id="GO:0030155">
    <property type="term" value="P:regulation of cell adhesion"/>
    <property type="evidence" value="ECO:0000250"/>
    <property type="project" value="UniProtKB"/>
</dbReference>
<dbReference type="GO" id="GO:0001936">
    <property type="term" value="P:regulation of endothelial cell proliferation"/>
    <property type="evidence" value="ECO:0000250"/>
    <property type="project" value="UniProtKB"/>
</dbReference>
<dbReference type="CDD" id="cd11301">
    <property type="entry name" value="Fut1_Fut2_like"/>
    <property type="match status" value="1"/>
</dbReference>
<dbReference type="InterPro" id="IPR002516">
    <property type="entry name" value="Glyco_trans_11"/>
</dbReference>
<dbReference type="PANTHER" id="PTHR11927">
    <property type="entry name" value="GALACTOSIDE 2-L-FUCOSYLTRANSFERASE"/>
    <property type="match status" value="1"/>
</dbReference>
<dbReference type="PANTHER" id="PTHR11927:SF2">
    <property type="entry name" value="GALACTOSIDE ALPHA-(1,2)-FUCOSYLTRANSFERASE 2"/>
    <property type="match status" value="1"/>
</dbReference>
<dbReference type="Pfam" id="PF01531">
    <property type="entry name" value="Glyco_transf_11"/>
    <property type="match status" value="1"/>
</dbReference>
<protein>
    <recommendedName>
        <fullName evidence="14">Galactoside alpha-(1,2)-fucosyltransferase 2</fullName>
    </recommendedName>
    <alternativeName>
        <fullName>Alpha(1,2)FT 2</fullName>
    </alternativeName>
    <alternativeName>
        <fullName>Fucosyltransferase 2</fullName>
    </alternativeName>
    <alternativeName>
        <fullName>GDP-L-fucose:beta-D-galactoside 2-alpha-L-fucosyltransferase 2</fullName>
    </alternativeName>
    <alternativeName>
        <fullName evidence="13">GDP-fucose: beta-galactoside alpha1,2-fucosyltransferase</fullName>
        <shortName evidence="13">MFUT-II</shortName>
    </alternativeName>
    <alternativeName>
        <fullName>Secretory blood group protein 2</fullName>
    </alternativeName>
    <alternativeName>
        <fullName evidence="14">Type 1 galactoside alpha-(1,2)-fucosyltransferase FUT2</fullName>
        <ecNumber evidence="6">2.4.1.69</ecNumber>
    </alternativeName>
    <alternativeName>
        <fullName evidence="14">Type 2 galactoside alpha-(1,2)-fucosyltransferase FUT2</fullName>
        <ecNumber evidence="6">2.4.1.344</ecNumber>
    </alternativeName>
</protein>
<reference key="1">
    <citation type="journal article" date="2000" name="Biochim. Biophys. Acta">
        <title>GDP-fucose: beta-galactoside alpha1,2-fucosyltransferase, MFUT-II, and not MFUT-I or -III, is induced in a restricted region of the digestive tract of germ-free mice by host-microbe interactions and cycloheximide.</title>
        <authorList>
            <person name="Lin B."/>
            <person name="Hayashi Y."/>
            <person name="Saito M."/>
            <person name="Sakakibara Y."/>
            <person name="Yanagisawa M."/>
            <person name="Iwamori M."/>
        </authorList>
    </citation>
    <scope>NUCLEOTIDE SEQUENCE [MRNA]</scope>
    <scope>CATALYTIC ACTIVITY</scope>
    <scope>FUNCTION</scope>
    <source>
        <strain>ICR</strain>
        <tissue>Gastrointestinal tract</tissue>
    </source>
</reference>
<reference key="2">
    <citation type="journal article" date="2001" name="J. Biol. Chem.">
        <title>Molecular cloning, genomic mapping, and expression of two secretor blood group alpha (1,2)fucosyltransferase genes differentially regulated in mouse uterine epithelium and gastrointestinal tract.</title>
        <authorList>
            <person name="Domino S.E."/>
            <person name="Zhang L."/>
            <person name="Lowe J.B."/>
        </authorList>
    </citation>
    <scope>NUCLEOTIDE SEQUENCE [GENOMIC DNA]</scope>
    <scope>FUNCTION</scope>
    <scope>CATALYTIC ACTIVITY</scope>
    <scope>TISSUE SPECIFICITY</scope>
    <scope>DEVELOPMENTAL STAGE</scope>
    <source>
        <strain>129/Ola</strain>
    </source>
</reference>
<reference key="3">
    <citation type="journal article" date="2005" name="Science">
        <title>The transcriptional landscape of the mammalian genome.</title>
        <authorList>
            <person name="Carninci P."/>
            <person name="Kasukawa T."/>
            <person name="Katayama S."/>
            <person name="Gough J."/>
            <person name="Frith M.C."/>
            <person name="Maeda N."/>
            <person name="Oyama R."/>
            <person name="Ravasi T."/>
            <person name="Lenhard B."/>
            <person name="Wells C."/>
            <person name="Kodzius R."/>
            <person name="Shimokawa K."/>
            <person name="Bajic V.B."/>
            <person name="Brenner S.E."/>
            <person name="Batalov S."/>
            <person name="Forrest A.R."/>
            <person name="Zavolan M."/>
            <person name="Davis M.J."/>
            <person name="Wilming L.G."/>
            <person name="Aidinis V."/>
            <person name="Allen J.E."/>
            <person name="Ambesi-Impiombato A."/>
            <person name="Apweiler R."/>
            <person name="Aturaliya R.N."/>
            <person name="Bailey T.L."/>
            <person name="Bansal M."/>
            <person name="Baxter L."/>
            <person name="Beisel K.W."/>
            <person name="Bersano T."/>
            <person name="Bono H."/>
            <person name="Chalk A.M."/>
            <person name="Chiu K.P."/>
            <person name="Choudhary V."/>
            <person name="Christoffels A."/>
            <person name="Clutterbuck D.R."/>
            <person name="Crowe M.L."/>
            <person name="Dalla E."/>
            <person name="Dalrymple B.P."/>
            <person name="de Bono B."/>
            <person name="Della Gatta G."/>
            <person name="di Bernardo D."/>
            <person name="Down T."/>
            <person name="Engstrom P."/>
            <person name="Fagiolini M."/>
            <person name="Faulkner G."/>
            <person name="Fletcher C.F."/>
            <person name="Fukushima T."/>
            <person name="Furuno M."/>
            <person name="Futaki S."/>
            <person name="Gariboldi M."/>
            <person name="Georgii-Hemming P."/>
            <person name="Gingeras T.R."/>
            <person name="Gojobori T."/>
            <person name="Green R.E."/>
            <person name="Gustincich S."/>
            <person name="Harbers M."/>
            <person name="Hayashi Y."/>
            <person name="Hensch T.K."/>
            <person name="Hirokawa N."/>
            <person name="Hill D."/>
            <person name="Huminiecki L."/>
            <person name="Iacono M."/>
            <person name="Ikeo K."/>
            <person name="Iwama A."/>
            <person name="Ishikawa T."/>
            <person name="Jakt M."/>
            <person name="Kanapin A."/>
            <person name="Katoh M."/>
            <person name="Kawasawa Y."/>
            <person name="Kelso J."/>
            <person name="Kitamura H."/>
            <person name="Kitano H."/>
            <person name="Kollias G."/>
            <person name="Krishnan S.P."/>
            <person name="Kruger A."/>
            <person name="Kummerfeld S.K."/>
            <person name="Kurochkin I.V."/>
            <person name="Lareau L.F."/>
            <person name="Lazarevic D."/>
            <person name="Lipovich L."/>
            <person name="Liu J."/>
            <person name="Liuni S."/>
            <person name="McWilliam S."/>
            <person name="Madan Babu M."/>
            <person name="Madera M."/>
            <person name="Marchionni L."/>
            <person name="Matsuda H."/>
            <person name="Matsuzawa S."/>
            <person name="Miki H."/>
            <person name="Mignone F."/>
            <person name="Miyake S."/>
            <person name="Morris K."/>
            <person name="Mottagui-Tabar S."/>
            <person name="Mulder N."/>
            <person name="Nakano N."/>
            <person name="Nakauchi H."/>
            <person name="Ng P."/>
            <person name="Nilsson R."/>
            <person name="Nishiguchi S."/>
            <person name="Nishikawa S."/>
            <person name="Nori F."/>
            <person name="Ohara O."/>
            <person name="Okazaki Y."/>
            <person name="Orlando V."/>
            <person name="Pang K.C."/>
            <person name="Pavan W.J."/>
            <person name="Pavesi G."/>
            <person name="Pesole G."/>
            <person name="Petrovsky N."/>
            <person name="Piazza S."/>
            <person name="Reed J."/>
            <person name="Reid J.F."/>
            <person name="Ring B.Z."/>
            <person name="Ringwald M."/>
            <person name="Rost B."/>
            <person name="Ruan Y."/>
            <person name="Salzberg S.L."/>
            <person name="Sandelin A."/>
            <person name="Schneider C."/>
            <person name="Schoenbach C."/>
            <person name="Sekiguchi K."/>
            <person name="Semple C.A."/>
            <person name="Seno S."/>
            <person name="Sessa L."/>
            <person name="Sheng Y."/>
            <person name="Shibata Y."/>
            <person name="Shimada H."/>
            <person name="Shimada K."/>
            <person name="Silva D."/>
            <person name="Sinclair B."/>
            <person name="Sperling S."/>
            <person name="Stupka E."/>
            <person name="Sugiura K."/>
            <person name="Sultana R."/>
            <person name="Takenaka Y."/>
            <person name="Taki K."/>
            <person name="Tammoja K."/>
            <person name="Tan S.L."/>
            <person name="Tang S."/>
            <person name="Taylor M.S."/>
            <person name="Tegner J."/>
            <person name="Teichmann S.A."/>
            <person name="Ueda H.R."/>
            <person name="van Nimwegen E."/>
            <person name="Verardo R."/>
            <person name="Wei C.L."/>
            <person name="Yagi K."/>
            <person name="Yamanishi H."/>
            <person name="Zabarovsky E."/>
            <person name="Zhu S."/>
            <person name="Zimmer A."/>
            <person name="Hide W."/>
            <person name="Bult C."/>
            <person name="Grimmond S.M."/>
            <person name="Teasdale R.D."/>
            <person name="Liu E.T."/>
            <person name="Brusic V."/>
            <person name="Quackenbush J."/>
            <person name="Wahlestedt C."/>
            <person name="Mattick J.S."/>
            <person name="Hume D.A."/>
            <person name="Kai C."/>
            <person name="Sasaki D."/>
            <person name="Tomaru Y."/>
            <person name="Fukuda S."/>
            <person name="Kanamori-Katayama M."/>
            <person name="Suzuki M."/>
            <person name="Aoki J."/>
            <person name="Arakawa T."/>
            <person name="Iida J."/>
            <person name="Imamura K."/>
            <person name="Itoh M."/>
            <person name="Kato T."/>
            <person name="Kawaji H."/>
            <person name="Kawagashira N."/>
            <person name="Kawashima T."/>
            <person name="Kojima M."/>
            <person name="Kondo S."/>
            <person name="Konno H."/>
            <person name="Nakano K."/>
            <person name="Ninomiya N."/>
            <person name="Nishio T."/>
            <person name="Okada M."/>
            <person name="Plessy C."/>
            <person name="Shibata K."/>
            <person name="Shiraki T."/>
            <person name="Suzuki S."/>
            <person name="Tagami M."/>
            <person name="Waki K."/>
            <person name="Watahiki A."/>
            <person name="Okamura-Oho Y."/>
            <person name="Suzuki H."/>
            <person name="Kawai J."/>
            <person name="Hayashizaki Y."/>
        </authorList>
    </citation>
    <scope>NUCLEOTIDE SEQUENCE [LARGE SCALE MRNA]</scope>
    <source>
        <strain>C57BL/6J</strain>
        <tissue>Colon</tissue>
    </source>
</reference>
<reference key="4">
    <citation type="journal article" date="2001" name="Arch. Biochem. Biophys.">
        <title>Characterization of three members of murine alpha1,2-fucosyltransferases: change in the expression of the Se gene in the intestine of mice after administration of microbes.</title>
        <authorList>
            <person name="Lin B."/>
            <person name="Saito M."/>
            <person name="Sakakibara Y."/>
            <person name="Hayashi Y."/>
            <person name="Yanagisawa M."/>
            <person name="Iwamori M."/>
        </authorList>
    </citation>
    <scope>CATALYTIC ACTIVITY</scope>
    <scope>FUNCTION</scope>
    <scope>TISSUE SPECIFICITY</scope>
    <scope>BIOPHYSICOCHEMICAL PROPERTIES</scope>
    <scope>INDUCTION</scope>
</reference>
<reference key="5">
    <citation type="journal article" date="2001" name="Mol. Cell. Biol.">
        <title>Deficiency of reproductive tract alpha(1,2)fucosylated glycans and normal fertility in mice with targeted deletions of the FUT1 or FUT2 alpha(1,2)fucosyltransferase locus.</title>
        <authorList>
            <person name="Domino S.E."/>
            <person name="Zhang L."/>
            <person name="Gillespie P.J."/>
            <person name="Saunders T.L."/>
            <person name="Lowe J.B."/>
        </authorList>
    </citation>
    <scope>DISRUPTION PHENOTYPE</scope>
    <scope>FUNCTION</scope>
</reference>
<reference key="6">
    <citation type="journal article" date="2004" name="Biochem. J.">
        <title>Tissue-specific loss of fucosylated glycolipids in mice with targeted deletion of alpha(1,2)fucosyltransferase genes.</title>
        <authorList>
            <person name="Iwamori M."/>
            <person name="Domino S.E."/>
        </authorList>
    </citation>
    <scope>CATALYTIC ACTIVITY</scope>
    <scope>FUNCTION</scope>
    <scope>BIOPHYSICOCHEMICAL PROPERTIES</scope>
    <scope>TISSUE SPECIFICITY</scope>
    <scope>INDUCTION</scope>
</reference>
<reference key="7">
    <citation type="journal article" date="2009" name="Glycobiology">
        <title>Fut2-null mice display an altered glycosylation profile and impaired BabA-mediated Helicobacter pylori adhesion to gastric mucosa.</title>
        <authorList>
            <person name="Magalhaes A."/>
            <person name="Gomes J."/>
            <person name="Ismail M.N."/>
            <person name="Haslam S.M."/>
            <person name="Mendes N."/>
            <person name="Osorio H."/>
            <person name="David L."/>
            <person name="Le Pendu J."/>
            <person name="Haas R."/>
            <person name="Dell A."/>
            <person name="Boren T."/>
            <person name="Reis C.A."/>
        </authorList>
    </citation>
    <scope>FUNCTION</scope>
</reference>
<reference key="8">
    <citation type="journal article" date="2013" name="Int. J. Mol. Sci.">
        <title>Different effects of androgen on the expression of Fut1, Fut2, Fut4 and Fut9 in male mouse reproductive tract.</title>
        <authorList>
            <person name="Wang C.M."/>
            <person name="Hu S.G."/>
            <person name="Ru Y.F."/>
            <person name="Yao G.X."/>
            <person name="Ma W.B."/>
            <person name="Gu Y.H."/>
            <person name="Chu C."/>
            <person name="Wang S.L."/>
            <person name="Zhou Z.M."/>
            <person name="Liu Q."/>
            <person name="Zhou Y.C."/>
            <person name="Zhang Y.L."/>
        </authorList>
    </citation>
    <scope>INDUCTION</scope>
</reference>
<reference key="9">
    <citation type="journal article" date="2016" name="Sci. Rep.">
        <title>Muc5ac gastric mucin glycosylation is shaped by FUT2 activity and functionally impacts Helicobacter pylori binding.</title>
        <authorList>
            <person name="Magalhaes A."/>
            <person name="Rossez Y."/>
            <person name="Robbe-Masselot C."/>
            <person name="Maes E."/>
            <person name="Gomes J."/>
            <person name="Shevtsova A."/>
            <person name="Bugaytsova J."/>
            <person name="Boren T."/>
            <person name="Reis C.A."/>
        </authorList>
    </citation>
    <scope>FUNCTION</scope>
</reference>
<comment type="function">
    <text evidence="5 6 7 8 9 10 12">Catalyzes the transfer of L-fucose, from a guanosine diphosphate-beta-L-fucose, to the terminal galactose on both O- and N-linked glycans chains of cell surface glycoproteins and glycolipids and the resulting epitope regulates several processes such as cell-cell interaction including host-microbe interaction, cell surface expression and cell proliferation (PubMed:11018479, PubMed:11323419, PubMed:11368156, PubMed:14967068, PubMed:19706747, PubMed:27161092). Preferentially fucosylates gangliosides GA1 and GM1 in the antrum, cecum and colon and in the female reproductive organs (PubMed:11713270, PubMed:14967068). Fucosylated host glycoproteins or glycolipids mediate interaction with intestinal microbiota influencing its composition (PubMed:19706747, PubMed:27161092). Creates a soluble precursor oligosaccharide FuC-alpha ((1,2)Galbeta-) called the H antigen which is an essential substrate for the final step in the soluble ABO blood group antigen synthesis pathway (PubMed:11323419).</text>
</comment>
<comment type="catalytic activity">
    <reaction evidence="6">
        <text>a beta-D-galactosyl-(1-&gt;3)-N-acetyl-beta-D-glucosaminyl derivative + GDP-beta-L-fucose = an alpha-L-Fuc-(1-&gt;2)-beta-D-Gal-(1-&gt;3)-beta-D-GlcNAc derivative + GDP + H(+)</text>
        <dbReference type="Rhea" id="RHEA:50664"/>
        <dbReference type="ChEBI" id="CHEBI:15378"/>
        <dbReference type="ChEBI" id="CHEBI:57273"/>
        <dbReference type="ChEBI" id="CHEBI:58189"/>
        <dbReference type="ChEBI" id="CHEBI:133506"/>
        <dbReference type="ChEBI" id="CHEBI:133509"/>
        <dbReference type="EC" id="2.4.1.69"/>
    </reaction>
    <physiologicalReaction direction="left-to-right" evidence="15">
        <dbReference type="Rhea" id="RHEA:50665"/>
    </physiologicalReaction>
</comment>
<comment type="catalytic activity">
    <reaction evidence="6">
        <text>a beta-D-galactosyl-(1-&gt;4)-N-acetyl-beta-D-glucosaminyl derivative + GDP-beta-L-fucose = an alpha-L-Fuc-(1-&gt;2)-beta-D-Gal-(1-&gt;4)-beta-D-GlcNAc derivative + GDP + H(+)</text>
        <dbReference type="Rhea" id="RHEA:50668"/>
        <dbReference type="ChEBI" id="CHEBI:15378"/>
        <dbReference type="ChEBI" id="CHEBI:57273"/>
        <dbReference type="ChEBI" id="CHEBI:58189"/>
        <dbReference type="ChEBI" id="CHEBI:133507"/>
        <dbReference type="ChEBI" id="CHEBI:133510"/>
        <dbReference type="EC" id="2.4.1.344"/>
    </reaction>
    <physiologicalReaction direction="left-to-right" evidence="15">
        <dbReference type="Rhea" id="RHEA:50669"/>
    </physiologicalReaction>
</comment>
<comment type="catalytic activity">
    <reaction evidence="7 9">
        <text>a neolactoside nLc4Cer + GDP-beta-L-fucose = a neolactoside IV(2)-alpha-Fuc-nLc4Cer + GDP + H(+)</text>
        <dbReference type="Rhea" id="RHEA:48800"/>
        <dbReference type="ChEBI" id="CHEBI:15378"/>
        <dbReference type="ChEBI" id="CHEBI:57273"/>
        <dbReference type="ChEBI" id="CHEBI:58189"/>
        <dbReference type="ChEBI" id="CHEBI:90376"/>
        <dbReference type="ChEBI" id="CHEBI:90803"/>
    </reaction>
    <physiologicalReaction direction="left-to-right" evidence="16 17">
        <dbReference type="Rhea" id="RHEA:48801"/>
    </physiologicalReaction>
</comment>
<comment type="catalytic activity">
    <reaction evidence="7 9">
        <text>a neolactoside nLc4Cer(d18:1(4E)) + GDP-beta-L-fucose = a neolactoside IV(2)-alpha-Fuc-nLc4Cer(d18:1(4E)) + GDP + H(+)</text>
        <dbReference type="Rhea" id="RHEA:48304"/>
        <dbReference type="ChEBI" id="CHEBI:15378"/>
        <dbReference type="ChEBI" id="CHEBI:17006"/>
        <dbReference type="ChEBI" id="CHEBI:28691"/>
        <dbReference type="ChEBI" id="CHEBI:57273"/>
        <dbReference type="ChEBI" id="CHEBI:58189"/>
    </reaction>
    <physiologicalReaction direction="left-to-right" evidence="16 17">
        <dbReference type="Rhea" id="RHEA:48305"/>
    </physiologicalReaction>
</comment>
<comment type="catalytic activity">
    <reaction evidence="7">
        <text>a ganglioside GM1 + GDP-beta-L-fucose = a ganglioside Fuc-GM1 + GDP + H(+)</text>
        <dbReference type="Rhea" id="RHEA:48292"/>
        <dbReference type="ChEBI" id="CHEBI:15378"/>
        <dbReference type="ChEBI" id="CHEBI:57273"/>
        <dbReference type="ChEBI" id="CHEBI:58189"/>
        <dbReference type="ChEBI" id="CHEBI:82639"/>
        <dbReference type="ChEBI" id="CHEBI:90189"/>
    </reaction>
    <physiologicalReaction direction="left-to-right" evidence="9">
        <dbReference type="Rhea" id="RHEA:48293"/>
    </physiologicalReaction>
</comment>
<comment type="catalytic activity">
    <reaction evidence="5 7 9">
        <text>a ganglioside GA1 + GDP-beta-L-fucose = a ganglioside Fuc-GA1 + GDP + H(+)</text>
        <dbReference type="Rhea" id="RHEA:48320"/>
        <dbReference type="ChEBI" id="CHEBI:15378"/>
        <dbReference type="ChEBI" id="CHEBI:57273"/>
        <dbReference type="ChEBI" id="CHEBI:58189"/>
        <dbReference type="ChEBI" id="CHEBI:88069"/>
        <dbReference type="ChEBI" id="CHEBI:90262"/>
    </reaction>
    <physiologicalReaction direction="left-to-right" evidence="9">
        <dbReference type="Rhea" id="RHEA:48321"/>
    </physiologicalReaction>
</comment>
<comment type="catalytic activity">
    <reaction evidence="7 9">
        <text>Lc4Cer + GDP-beta-L-fucose = alpha-L-fucosyl-(1-&gt;2)-beta-D-galactosyl-(1-&gt;3)-N-acetyl-beta-D-glucosaminyl-(1-&gt;3)-beta-D-galactosyl-(1-&gt;4)-beta-D-glucosyl-(1&lt;-&gt;1')-ceramide + GDP + H(+)</text>
        <dbReference type="Rhea" id="RHEA:48792"/>
        <dbReference type="ChEBI" id="CHEBI:15378"/>
        <dbReference type="ChEBI" id="CHEBI:57273"/>
        <dbReference type="ChEBI" id="CHEBI:58189"/>
        <dbReference type="ChEBI" id="CHEBI:90800"/>
        <dbReference type="ChEBI" id="CHEBI:90802"/>
    </reaction>
    <physiologicalReaction direction="left-to-right" evidence="16 17">
        <dbReference type="Rhea" id="RHEA:48793"/>
    </physiologicalReaction>
</comment>
<comment type="catalytic activity">
    <reaction evidence="7 9">
        <text>a beta-D-Gal-(1-&gt;3)-beta-D-GlcNAc-(1-&gt;3)-beta-D-Gal-(1-&gt;4)-beta-D-Glc-(1&lt;-&gt;1')-Cer(d18:1(4E)) + GDP-beta-L-fucose = alpha-L-fucosyl-(1-&gt;2)- beta-D-galactosyl-(1-&gt;3)-N-acetyl-beta-D-glucosaminyl-(1-&gt;3)-beta-D-galactosyl-(1-&gt;4)-beta-D-glucosyl-(1&lt;-&gt;1')-N-acylsphing-4-enine + GDP + H(+)</text>
        <dbReference type="Rhea" id="RHEA:32175"/>
        <dbReference type="ChEBI" id="CHEBI:15378"/>
        <dbReference type="ChEBI" id="CHEBI:17292"/>
        <dbReference type="ChEBI" id="CHEBI:28743"/>
        <dbReference type="ChEBI" id="CHEBI:57273"/>
        <dbReference type="ChEBI" id="CHEBI:58189"/>
        <dbReference type="EC" id="2.4.1.69"/>
    </reaction>
    <physiologicalReaction direction="left-to-right" evidence="16 17">
        <dbReference type="Rhea" id="RHEA:32176"/>
    </physiologicalReaction>
</comment>
<comment type="catalytic activity">
    <reaction evidence="7">
        <text>a ganglioside GD1b + GDP-beta-L-fucose = a ganglioside Fuc-GD1b + GDP + H(+)</text>
        <dbReference type="Rhea" id="RHEA:48324"/>
        <dbReference type="ChEBI" id="CHEBI:15378"/>
        <dbReference type="ChEBI" id="CHEBI:57273"/>
        <dbReference type="ChEBI" id="CHEBI:58189"/>
        <dbReference type="ChEBI" id="CHEBI:82939"/>
        <dbReference type="ChEBI" id="CHEBI:90265"/>
    </reaction>
    <physiologicalReaction direction="left-to-right" evidence="16 17">
        <dbReference type="Rhea" id="RHEA:48325"/>
    </physiologicalReaction>
</comment>
<comment type="catalytic activity">
    <reaction evidence="2">
        <text>a ganglioside GM1 (d18:1(4E)) + GDP-beta-L-fucose = a ganglioside Fuc-GM1 (d18:1(4E)) + GDP + H(+)</text>
        <dbReference type="Rhea" id="RHEA:42040"/>
        <dbReference type="ChEBI" id="CHEBI:15378"/>
        <dbReference type="ChEBI" id="CHEBI:57273"/>
        <dbReference type="ChEBI" id="CHEBI:58189"/>
        <dbReference type="ChEBI" id="CHEBI:77709"/>
        <dbReference type="ChEBI" id="CHEBI:78607"/>
    </reaction>
    <physiologicalReaction direction="left-to-right" evidence="2">
        <dbReference type="Rhea" id="RHEA:42041"/>
    </physiologicalReaction>
</comment>
<comment type="catalytic activity">
    <reaction evidence="2">
        <text>a globoside GalGb4Cer (d18:1(4E)) + GDP-beta-L-fucose = a globoside Globo-H (d18:1(4E)) + GDP + H(+)</text>
        <dbReference type="Rhea" id="RHEA:42044"/>
        <dbReference type="ChEBI" id="CHEBI:15378"/>
        <dbReference type="ChEBI" id="CHEBI:57273"/>
        <dbReference type="ChEBI" id="CHEBI:58189"/>
        <dbReference type="ChEBI" id="CHEBI:62571"/>
        <dbReference type="ChEBI" id="CHEBI:62649"/>
    </reaction>
    <physiologicalReaction direction="left-to-right" evidence="2">
        <dbReference type="Rhea" id="RHEA:42045"/>
    </physiologicalReaction>
</comment>
<comment type="catalytic activity">
    <reaction evidence="7">
        <text>a lactoside III(4)-a-Fuc-Lc4Cer + GDP-beta-L-fucose = a lactoside IV(2),III(4)-a-[Fuc]2-Lc4Cer + GDP + H(+)</text>
        <dbReference type="Rhea" id="RHEA:62616"/>
        <dbReference type="ChEBI" id="CHEBI:15378"/>
        <dbReference type="ChEBI" id="CHEBI:57273"/>
        <dbReference type="ChEBI" id="CHEBI:58189"/>
        <dbReference type="ChEBI" id="CHEBI:90811"/>
        <dbReference type="ChEBI" id="CHEBI:142612"/>
    </reaction>
    <physiologicalReaction direction="left-to-right" evidence="16">
        <dbReference type="Rhea" id="RHEA:62617"/>
    </physiologicalReaction>
</comment>
<comment type="catalytic activity">
    <reaction evidence="3">
        <text>beta-D-galactosyl-(1-&gt;3)-N-acetyl-D-galactosamine + GDP-beta-L-fucose = alpha-L-fucosyl-(1-&gt;2)-beta-D-galactosyl-(1-&gt;3)-N-acetyl-D-galactosamine + GDP + H(+)</text>
        <dbReference type="Rhea" id="RHEA:62964"/>
        <dbReference type="ChEBI" id="CHEBI:15378"/>
        <dbReference type="ChEBI" id="CHEBI:57273"/>
        <dbReference type="ChEBI" id="CHEBI:58189"/>
        <dbReference type="ChEBI" id="CHEBI:84728"/>
        <dbReference type="ChEBI" id="CHEBI:546807"/>
    </reaction>
    <physiologicalReaction direction="left-to-right" evidence="3">
        <dbReference type="Rhea" id="RHEA:62965"/>
    </physiologicalReaction>
</comment>
<comment type="biophysicochemical properties">
    <kinetics>
        <KM evidence="6">10.2 mM for phenyl-beta-D-galactoside</KM>
        <KM evidence="7">54.73 mM for phenyl-beta-D-galactoside</KM>
        <KM evidence="7">36.46 mM for lactose</KM>
        <KM evidence="9">50 uM for ganglioside GA1</KM>
        <KM evidence="9">500 uM for ganglioside GM1a</KM>
        <KM evidence="9">166 uM for nLc4Cer</KM>
        <KM evidence="9">95 uM for Lc4Cer</KM>
    </kinetics>
</comment>
<comment type="pathway">
    <text evidence="6">Protein modification; protein glycosylation.</text>
</comment>
<comment type="subcellular location">
    <subcellularLocation>
        <location evidence="1">Golgi apparatus</location>
        <location evidence="1">Golgi stack membrane</location>
        <topology evidence="1">Single-pass type II membrane protein</topology>
    </subcellularLocation>
    <text evidence="1">Membrane-bound form in trans cisternae of Golgi.</text>
</comment>
<comment type="tissue specificity">
    <text evidence="6 7 9">Expressed in stomach, colon, ovary and uterus, specifically in luminal uterine epithelium (PubMed:11323419, PubMed:11368156). Expressed in various tissues including heart, liver, kidney, testis, epididymis, small intestine,and cecum (PubMed:11368156). Expressed in duodenum, jejunum and ileum (PubMed:14967068).</text>
</comment>
<comment type="developmental stage">
    <text evidence="6">Detected at highest levels in proestrus and estrus, with 10- to 12-fold increases over early diestrus.</text>
</comment>
<comment type="induction">
    <text evidence="7 9 11">Induced after microbes administration in the intestinal epithelia, particularly in the duodenal and jejunal epithelia (PubMed:11368156, PubMed:14967068). Down-regulated by androgen in the caput epididymis (PubMed:24284406).</text>
</comment>
<comment type="disruption phenotype">
    <text evidence="8">Homozygous knockout mice for FUT2 are fertiles and develop normally and exhibit no gross phenotypic abnormalities.</text>
</comment>
<comment type="miscellaneous">
    <text evidence="6">In mouse, there are three genes (Fut1, Fut2 and Sec1) which encode galactoside 2-L-fucosyltransferase.</text>
</comment>
<comment type="similarity">
    <text evidence="14">Belongs to the glycosyltransferase 11 family.</text>
</comment>
<comment type="online information" name="Functional Glycomics Gateway - GTase">
    <link uri="http://www.functionalglycomics.org/glycomics/molecule/jsp/glycoEnzyme/viewGlycoEnzyme.jsp?gbpId=gt_mou_612"/>
    <text>Fucosyltransferase 2</text>
</comment>
<feature type="chain" id="PRO_0000149109" description="Galactoside alpha-(1,2)-fucosyltransferase 2">
    <location>
        <begin position="1"/>
        <end position="347"/>
    </location>
</feature>
<feature type="topological domain" description="Cytoplasmic" evidence="4">
    <location>
        <begin position="1"/>
        <end position="5"/>
    </location>
</feature>
<feature type="transmembrane region" description="Helical; Signal-anchor for type II membrane protein" evidence="4">
    <location>
        <begin position="6"/>
        <end position="26"/>
    </location>
</feature>
<feature type="topological domain" description="Lumenal" evidence="4">
    <location>
        <begin position="27"/>
        <end position="347"/>
    </location>
</feature>
<feature type="glycosylation site" description="N-linked (GlcNAc...) asparagine" evidence="4">
    <location>
        <position position="192"/>
    </location>
</feature>
<feature type="glycosylation site" description="N-linked (GlcNAc...) asparagine" evidence="4">
    <location>
        <position position="258"/>
    </location>
</feature>
<feature type="glycosylation site" description="N-linked (GlcNAc...) asparagine" evidence="4">
    <location>
        <position position="286"/>
    </location>
</feature>
<feature type="glycosylation site" description="N-linked (GlcNAc...) asparagine" evidence="4">
    <location>
        <position position="312"/>
    </location>
</feature>
<feature type="sequence conflict" description="In Ref. 1; AAC16887." evidence="14" ref="1">
    <original>R</original>
    <variation>Q</variation>
    <location>
        <position position="31"/>
    </location>
</feature>
<proteinExistence type="evidence at protein level"/>
<accession>Q9JL27</accession>
<accession>O70504</accession>
<organism>
    <name type="scientific">Mus musculus</name>
    <name type="common">Mouse</name>
    <dbReference type="NCBI Taxonomy" id="10090"/>
    <lineage>
        <taxon>Eukaryota</taxon>
        <taxon>Metazoa</taxon>
        <taxon>Chordata</taxon>
        <taxon>Craniata</taxon>
        <taxon>Vertebrata</taxon>
        <taxon>Euteleostomi</taxon>
        <taxon>Mammalia</taxon>
        <taxon>Eutheria</taxon>
        <taxon>Euarchontoglires</taxon>
        <taxon>Glires</taxon>
        <taxon>Rodentia</taxon>
        <taxon>Myomorpha</taxon>
        <taxon>Muroidea</taxon>
        <taxon>Muridae</taxon>
        <taxon>Murinae</taxon>
        <taxon>Mus</taxon>
        <taxon>Mus</taxon>
    </lineage>
</organism>
<evidence type="ECO:0000250" key="1"/>
<evidence type="ECO:0000250" key="2">
    <source>
        <dbReference type="UniProtKB" id="Q10984"/>
    </source>
</evidence>
<evidence type="ECO:0000250" key="3">
    <source>
        <dbReference type="UniProtKB" id="Q28113"/>
    </source>
</evidence>
<evidence type="ECO:0000255" key="4"/>
<evidence type="ECO:0000269" key="5">
    <source>
    </source>
</evidence>
<evidence type="ECO:0000269" key="6">
    <source>
    </source>
</evidence>
<evidence type="ECO:0000269" key="7">
    <source>
    </source>
</evidence>
<evidence type="ECO:0000269" key="8">
    <source>
    </source>
</evidence>
<evidence type="ECO:0000269" key="9">
    <source>
    </source>
</evidence>
<evidence type="ECO:0000269" key="10">
    <source>
    </source>
</evidence>
<evidence type="ECO:0000269" key="11">
    <source>
    </source>
</evidence>
<evidence type="ECO:0000269" key="12">
    <source>
    </source>
</evidence>
<evidence type="ECO:0000303" key="13">
    <source>
    </source>
</evidence>
<evidence type="ECO:0000305" key="14"/>
<evidence type="ECO:0000305" key="15">
    <source>
    </source>
</evidence>
<evidence type="ECO:0000305" key="16">
    <source>
    </source>
</evidence>
<evidence type="ECO:0000305" key="17">
    <source>
    </source>
</evidence>
<evidence type="ECO:0000312" key="18">
    <source>
        <dbReference type="MGI" id="MGI:109374"/>
    </source>
</evidence>
<sequence>MASAQVPFSFPLAHFLIFVFVTSTIIHLQQRIVKLQTLSEKELQAVQMSSPNAARTDMQQSAKLQGIFTINSIGRLGNQMGEYATLFALARMNGRLAFIPESMHNALAPIFRISLPVLHSDTARRIPWQNYHLNDWMEERYRHIPGQYVRFTGYPCSWTFYHHLRPEILKEFTLHDHVREEAQAFLRGLRVNGSQPSTFVGVHVRRGDYVHVMPKVWKGVVADRGYLEKALDRFRARYSSPVFVVTSNGMAWCRENINTSLGDVVFAGNGIEGSPAKDFALLTQCNHTIMTIGTFGIWAAYLAGGDTIYLANYTLPDSPFLKIFKPAAAFLPEWMGIPADLSPLLKH</sequence>
<gene>
    <name evidence="18" type="primary">Fut2</name>
    <name type="synonym">Sec2</name>
</gene>
<name>FUT2_MOUSE</name>